<evidence type="ECO:0000250" key="1">
    <source>
        <dbReference type="UniProtKB" id="P00403"/>
    </source>
</evidence>
<evidence type="ECO:0000250" key="2">
    <source>
        <dbReference type="UniProtKB" id="P00410"/>
    </source>
</evidence>
<evidence type="ECO:0000250" key="3">
    <source>
        <dbReference type="UniProtKB" id="P68530"/>
    </source>
</evidence>
<evidence type="ECO:0000305" key="4"/>
<sequence>MPYPLQLGLQDATSPIMEELTHFHDHTLMIVFLISSLVLYIISSMLTTKLTHTSTMDAQEVETIWTILPAMILILIALPSLRILYMMDEINDPSLTVKTMGHQWYWSYEYTDYEDLTFDSYMIPTNDLEPGQLRLLEVDNRVVLPMEMPIRMLISSEDVLHSWAIPSMGLKTDAIPGRLNQATLMSSRPGLFYGQCSEICGSNHSFMPIVLELVPLKYFEDWSASLL</sequence>
<gene>
    <name type="primary">MT-CO2</name>
    <name type="synonym">COII</name>
    <name type="synonym">COXII</name>
    <name type="synonym">MTCO2</name>
</gene>
<accession>Q8W9N3</accession>
<dbReference type="EC" id="7.1.1.9"/>
<dbReference type="EMBL" id="AJ421723">
    <property type="protein sequence ID" value="CAD18911.1"/>
    <property type="molecule type" value="Genomic_DNA"/>
</dbReference>
<dbReference type="SMR" id="Q8W9N3"/>
<dbReference type="CTD" id="4513"/>
<dbReference type="GO" id="GO:0005743">
    <property type="term" value="C:mitochondrial inner membrane"/>
    <property type="evidence" value="ECO:0007669"/>
    <property type="project" value="UniProtKB-SubCell"/>
</dbReference>
<dbReference type="GO" id="GO:0045277">
    <property type="term" value="C:respiratory chain complex IV"/>
    <property type="evidence" value="ECO:0000250"/>
    <property type="project" value="UniProtKB"/>
</dbReference>
<dbReference type="GO" id="GO:0005507">
    <property type="term" value="F:copper ion binding"/>
    <property type="evidence" value="ECO:0007669"/>
    <property type="project" value="InterPro"/>
</dbReference>
<dbReference type="GO" id="GO:0004129">
    <property type="term" value="F:cytochrome-c oxidase activity"/>
    <property type="evidence" value="ECO:0007669"/>
    <property type="project" value="UniProtKB-EC"/>
</dbReference>
<dbReference type="GO" id="GO:0042773">
    <property type="term" value="P:ATP synthesis coupled electron transport"/>
    <property type="evidence" value="ECO:0007669"/>
    <property type="project" value="TreeGrafter"/>
</dbReference>
<dbReference type="CDD" id="cd13912">
    <property type="entry name" value="CcO_II_C"/>
    <property type="match status" value="1"/>
</dbReference>
<dbReference type="FunFam" id="1.10.287.90:FF:000001">
    <property type="entry name" value="Cytochrome c oxidase subunit 2"/>
    <property type="match status" value="1"/>
</dbReference>
<dbReference type="FunFam" id="2.60.40.420:FF:000001">
    <property type="entry name" value="Cytochrome c oxidase subunit 2"/>
    <property type="match status" value="1"/>
</dbReference>
<dbReference type="Gene3D" id="1.10.287.90">
    <property type="match status" value="1"/>
</dbReference>
<dbReference type="Gene3D" id="2.60.40.420">
    <property type="entry name" value="Cupredoxins - blue copper proteins"/>
    <property type="match status" value="1"/>
</dbReference>
<dbReference type="InterPro" id="IPR045187">
    <property type="entry name" value="CcO_II"/>
</dbReference>
<dbReference type="InterPro" id="IPR002429">
    <property type="entry name" value="CcO_II-like_C"/>
</dbReference>
<dbReference type="InterPro" id="IPR034210">
    <property type="entry name" value="CcO_II_C"/>
</dbReference>
<dbReference type="InterPro" id="IPR001505">
    <property type="entry name" value="Copper_CuA"/>
</dbReference>
<dbReference type="InterPro" id="IPR008972">
    <property type="entry name" value="Cupredoxin"/>
</dbReference>
<dbReference type="InterPro" id="IPR014222">
    <property type="entry name" value="Cyt_c_oxidase_su2"/>
</dbReference>
<dbReference type="InterPro" id="IPR011759">
    <property type="entry name" value="Cyt_c_oxidase_su2_TM_dom"/>
</dbReference>
<dbReference type="InterPro" id="IPR036257">
    <property type="entry name" value="Cyt_c_oxidase_su2_TM_sf"/>
</dbReference>
<dbReference type="NCBIfam" id="TIGR02866">
    <property type="entry name" value="CoxB"/>
    <property type="match status" value="1"/>
</dbReference>
<dbReference type="PANTHER" id="PTHR22888:SF9">
    <property type="entry name" value="CYTOCHROME C OXIDASE SUBUNIT 2"/>
    <property type="match status" value="1"/>
</dbReference>
<dbReference type="PANTHER" id="PTHR22888">
    <property type="entry name" value="CYTOCHROME C OXIDASE, SUBUNIT II"/>
    <property type="match status" value="1"/>
</dbReference>
<dbReference type="Pfam" id="PF00116">
    <property type="entry name" value="COX2"/>
    <property type="match status" value="1"/>
</dbReference>
<dbReference type="Pfam" id="PF02790">
    <property type="entry name" value="COX2_TM"/>
    <property type="match status" value="1"/>
</dbReference>
<dbReference type="PRINTS" id="PR01166">
    <property type="entry name" value="CYCOXIDASEII"/>
</dbReference>
<dbReference type="SUPFAM" id="SSF49503">
    <property type="entry name" value="Cupredoxins"/>
    <property type="match status" value="1"/>
</dbReference>
<dbReference type="SUPFAM" id="SSF81464">
    <property type="entry name" value="Cytochrome c oxidase subunit II-like, transmembrane region"/>
    <property type="match status" value="1"/>
</dbReference>
<dbReference type="PROSITE" id="PS00078">
    <property type="entry name" value="COX2"/>
    <property type="match status" value="1"/>
</dbReference>
<dbReference type="PROSITE" id="PS50857">
    <property type="entry name" value="COX2_CUA"/>
    <property type="match status" value="1"/>
</dbReference>
<dbReference type="PROSITE" id="PS50999">
    <property type="entry name" value="COX2_TM"/>
    <property type="match status" value="1"/>
</dbReference>
<comment type="function">
    <text evidence="2">Component of the cytochrome c oxidase, the last enzyme in the mitochondrial electron transport chain which drives oxidative phosphorylation. The respiratory chain contains 3 multisubunit complexes succinate dehydrogenase (complex II, CII), ubiquinol-cytochrome c oxidoreductase (cytochrome b-c1 complex, complex III, CIII) and cytochrome c oxidase (complex IV, CIV), that cooperate to transfer electrons derived from NADH and succinate to molecular oxygen, creating an electrochemical gradient over the inner membrane that drives transmembrane transport and the ATP synthase. Cytochrome c oxidase is the component of the respiratory chain that catalyzes the reduction of oxygen to water. Electrons originating from reduced cytochrome c in the intermembrane space (IMS) are transferred via the dinuclear copper A center (CU(A)) of subunit 2 and heme A of subunit 1 to the active site in subunit 1, a binuclear center (BNC) formed by heme A3 and copper B (CU(B)). The BNC reduces molecular oxygen to 2 water molecules using 4 electrons from cytochrome c in the IMS and 4 protons from the mitochondrial matrix.</text>
</comment>
<comment type="catalytic activity">
    <reaction evidence="2">
        <text>4 Fe(II)-[cytochrome c] + O2 + 8 H(+)(in) = 4 Fe(III)-[cytochrome c] + 2 H2O + 4 H(+)(out)</text>
        <dbReference type="Rhea" id="RHEA:11436"/>
        <dbReference type="Rhea" id="RHEA-COMP:10350"/>
        <dbReference type="Rhea" id="RHEA-COMP:14399"/>
        <dbReference type="ChEBI" id="CHEBI:15377"/>
        <dbReference type="ChEBI" id="CHEBI:15378"/>
        <dbReference type="ChEBI" id="CHEBI:15379"/>
        <dbReference type="ChEBI" id="CHEBI:29033"/>
        <dbReference type="ChEBI" id="CHEBI:29034"/>
        <dbReference type="EC" id="7.1.1.9"/>
    </reaction>
    <physiologicalReaction direction="left-to-right" evidence="2">
        <dbReference type="Rhea" id="RHEA:11437"/>
    </physiologicalReaction>
</comment>
<comment type="cofactor">
    <cofactor evidence="3">
        <name>Cu cation</name>
        <dbReference type="ChEBI" id="CHEBI:23378"/>
    </cofactor>
    <text evidence="3">Binds a dinuclear copper A center per subunit.</text>
</comment>
<comment type="subunit">
    <text evidence="1 3">Component of the cytochrome c oxidase (complex IV, CIV), a multisubunit enzyme composed of 14 subunits. The complex is composed of a catalytic core of 3 subunits MT-CO1, MT-CO2 and MT-CO3, encoded in the mitochondrial DNA, and 11 supernumerary subunits COX4I, COX5A, COX5B, COX6A, COX6B, COX6C, COX7A, COX7B, COX7C, COX8 and NDUFA4, which are encoded in the nuclear genome. The complex exists as a monomer or a dimer and forms supercomplexes (SCs) in the inner mitochondrial membrane with NADH-ubiquinone oxidoreductase (complex I, CI) and ubiquinol-cytochrome c oxidoreductase (cytochrome b-c1 complex, complex III, CIII), resulting in different assemblies (supercomplex SCI(1)III(2)IV(1) and megacomplex MCI(2)III(2)IV(2)) (By similarity). Found in a complex with TMEM177, COA6, COX18, COX20, SCO1 and SCO2. Interacts with TMEM177 in a COX20-dependent manner. Interacts with COX20. Interacts with COX16 (By similarity).</text>
</comment>
<comment type="subcellular location">
    <subcellularLocation>
        <location evidence="3">Mitochondrion inner membrane</location>
        <topology evidence="3">Multi-pass membrane protein</topology>
    </subcellularLocation>
</comment>
<comment type="similarity">
    <text evidence="4">Belongs to the cytochrome c oxidase subunit 2 family.</text>
</comment>
<feature type="chain" id="PRO_0000183589" description="Cytochrome c oxidase subunit 2">
    <location>
        <begin position="1"/>
        <end position="227"/>
    </location>
</feature>
<feature type="topological domain" description="Mitochondrial intermembrane" evidence="3">
    <location>
        <begin position="1"/>
        <end position="14"/>
    </location>
</feature>
<feature type="transmembrane region" description="Helical; Name=I" evidence="3">
    <location>
        <begin position="15"/>
        <end position="45"/>
    </location>
</feature>
<feature type="topological domain" description="Mitochondrial matrix" evidence="3">
    <location>
        <begin position="46"/>
        <end position="59"/>
    </location>
</feature>
<feature type="transmembrane region" description="Helical; Name=II" evidence="3">
    <location>
        <begin position="60"/>
        <end position="87"/>
    </location>
</feature>
<feature type="topological domain" description="Mitochondrial intermembrane" evidence="3">
    <location>
        <begin position="88"/>
        <end position="227"/>
    </location>
</feature>
<feature type="binding site" evidence="3">
    <location>
        <position position="161"/>
    </location>
    <ligand>
        <name>Cu cation</name>
        <dbReference type="ChEBI" id="CHEBI:23378"/>
        <label>A1</label>
    </ligand>
</feature>
<feature type="binding site" evidence="3">
    <location>
        <position position="196"/>
    </location>
    <ligand>
        <name>Cu cation</name>
        <dbReference type="ChEBI" id="CHEBI:23378"/>
        <label>A1</label>
    </ligand>
</feature>
<feature type="binding site" evidence="3">
    <location>
        <position position="196"/>
    </location>
    <ligand>
        <name>Cu cation</name>
        <dbReference type="ChEBI" id="CHEBI:23378"/>
        <label>A2</label>
    </ligand>
</feature>
<feature type="binding site" evidence="3">
    <location>
        <position position="198"/>
    </location>
    <ligand>
        <name>Cu cation</name>
        <dbReference type="ChEBI" id="CHEBI:23378"/>
        <label>A2</label>
    </ligand>
</feature>
<feature type="binding site" evidence="3">
    <location>
        <position position="198"/>
    </location>
    <ligand>
        <name>Mg(2+)</name>
        <dbReference type="ChEBI" id="CHEBI:18420"/>
        <note>ligand shared with MT-CO1</note>
    </ligand>
</feature>
<feature type="binding site" evidence="3">
    <location>
        <position position="200"/>
    </location>
    <ligand>
        <name>Cu cation</name>
        <dbReference type="ChEBI" id="CHEBI:23378"/>
        <label>A1</label>
    </ligand>
</feature>
<feature type="binding site" evidence="3">
    <location>
        <position position="200"/>
    </location>
    <ligand>
        <name>Cu cation</name>
        <dbReference type="ChEBI" id="CHEBI:23378"/>
        <label>A2</label>
    </ligand>
</feature>
<feature type="binding site" evidence="3">
    <location>
        <position position="204"/>
    </location>
    <ligand>
        <name>Cu cation</name>
        <dbReference type="ChEBI" id="CHEBI:23378"/>
        <label>A2</label>
    </ligand>
</feature>
<feature type="binding site" evidence="3">
    <location>
        <position position="207"/>
    </location>
    <ligand>
        <name>Cu cation</name>
        <dbReference type="ChEBI" id="CHEBI:23378"/>
        <label>A1</label>
    </ligand>
</feature>
<protein>
    <recommendedName>
        <fullName>Cytochrome c oxidase subunit 2</fullName>
        <ecNumber>7.1.1.9</ecNumber>
    </recommendedName>
    <alternativeName>
        <fullName>Cytochrome c oxidase polypeptide II</fullName>
    </alternativeName>
</protein>
<name>COX2_DUGDU</name>
<keyword id="KW-0186">Copper</keyword>
<keyword id="KW-0249">Electron transport</keyword>
<keyword id="KW-0460">Magnesium</keyword>
<keyword id="KW-0472">Membrane</keyword>
<keyword id="KW-0479">Metal-binding</keyword>
<keyword id="KW-0496">Mitochondrion</keyword>
<keyword id="KW-0999">Mitochondrion inner membrane</keyword>
<keyword id="KW-0597">Phosphoprotein</keyword>
<keyword id="KW-0679">Respiratory chain</keyword>
<keyword id="KW-1278">Translocase</keyword>
<keyword id="KW-0812">Transmembrane</keyword>
<keyword id="KW-1133">Transmembrane helix</keyword>
<keyword id="KW-0813">Transport</keyword>
<organism>
    <name type="scientific">Dugong dugon</name>
    <name type="common">Dugong</name>
    <name type="synonym">Trichechus dugon</name>
    <dbReference type="NCBI Taxonomy" id="29137"/>
    <lineage>
        <taxon>Eukaryota</taxon>
        <taxon>Metazoa</taxon>
        <taxon>Chordata</taxon>
        <taxon>Craniata</taxon>
        <taxon>Vertebrata</taxon>
        <taxon>Euteleostomi</taxon>
        <taxon>Mammalia</taxon>
        <taxon>Eutheria</taxon>
        <taxon>Afrotheria</taxon>
        <taxon>Sirenia</taxon>
        <taxon>Dugongidae</taxon>
        <taxon>Dugong</taxon>
    </lineage>
</organism>
<geneLocation type="mitochondrion"/>
<proteinExistence type="inferred from homology"/>
<reference key="1">
    <citation type="journal article" date="2002" name="Proc. Natl. Acad. Sci. U.S.A.">
        <title>Mammalian mitogenomic relationships and the root of the eutherian tree.</title>
        <authorList>
            <person name="Arnason U."/>
            <person name="Adegoke J.A."/>
            <person name="Bodin K."/>
            <person name="Born E.W."/>
            <person name="Esa Y.B."/>
            <person name="Gullberg A."/>
            <person name="Nilsson M."/>
            <person name="Short R.V."/>
            <person name="Xu X."/>
            <person name="Janke A."/>
        </authorList>
    </citation>
    <scope>NUCLEOTIDE SEQUENCE [GENOMIC DNA]</scope>
</reference>